<dbReference type="EMBL" id="M55181">
    <property type="protein sequence ID" value="AAA40128.1"/>
    <property type="molecule type" value="mRNA"/>
</dbReference>
<dbReference type="EMBL" id="AK161272">
    <property type="protein sequence ID" value="BAE36283.1"/>
    <property type="molecule type" value="mRNA"/>
</dbReference>
<dbReference type="EMBL" id="BX004841">
    <property type="status" value="NOT_ANNOTATED_CDS"/>
    <property type="molecule type" value="Genomic_DNA"/>
</dbReference>
<dbReference type="EMBL" id="CH466538">
    <property type="protein sequence ID" value="EDL05699.1"/>
    <property type="molecule type" value="Genomic_DNA"/>
</dbReference>
<dbReference type="EMBL" id="CH466538">
    <property type="protein sequence ID" value="EDL05700.1"/>
    <property type="molecule type" value="Genomic_DNA"/>
</dbReference>
<dbReference type="EMBL" id="BC049766">
    <property type="protein sequence ID" value="AAH49766.1"/>
    <property type="molecule type" value="mRNA"/>
</dbReference>
<dbReference type="EMBL" id="M13227">
    <property type="protein sequence ID" value="AAA37553.1"/>
    <property type="molecule type" value="mRNA"/>
</dbReference>
<dbReference type="CCDS" id="CCDS17946.1"/>
<dbReference type="PIR" id="B35678">
    <property type="entry name" value="B35678"/>
</dbReference>
<dbReference type="RefSeq" id="NP_001002927.1">
    <property type="nucleotide sequence ID" value="NM_001002927.4"/>
</dbReference>
<dbReference type="RefSeq" id="NP_001335138.1">
    <property type="nucleotide sequence ID" value="NM_001348209.2"/>
</dbReference>
<dbReference type="BioGRID" id="202109">
    <property type="interactions" value="2"/>
</dbReference>
<dbReference type="FunCoup" id="P22005">
    <property type="interactions" value="465"/>
</dbReference>
<dbReference type="STRING" id="10090.ENSMUSP00000066822"/>
<dbReference type="GlyConnect" id="2610">
    <property type="glycosylation" value="1 N-Linked glycan (1 site)"/>
</dbReference>
<dbReference type="GlyCosmos" id="P22005">
    <property type="glycosylation" value="1 site, 1 glycan"/>
</dbReference>
<dbReference type="GlyGen" id="P22005">
    <property type="glycosylation" value="2 sites, 3 N-linked glycans (2 sites)"/>
</dbReference>
<dbReference type="iPTMnet" id="P22005"/>
<dbReference type="PhosphoSitePlus" id="P22005"/>
<dbReference type="CPTAC" id="non-CPTAC-3489"/>
<dbReference type="PaxDb" id="10090-ENSMUSP00000066822"/>
<dbReference type="PeptideAtlas" id="P22005"/>
<dbReference type="ProteomicsDB" id="288027"/>
<dbReference type="Antibodypedia" id="2211">
    <property type="antibodies" value="369 antibodies from 36 providers"/>
</dbReference>
<dbReference type="DNASU" id="18619"/>
<dbReference type="Ensembl" id="ENSMUST00000070375.8">
    <property type="protein sequence ID" value="ENSMUSP00000066822.8"/>
    <property type="gene ID" value="ENSMUSG00000045573.10"/>
</dbReference>
<dbReference type="GeneID" id="18619"/>
<dbReference type="KEGG" id="mmu:18619"/>
<dbReference type="UCSC" id="uc008rwz.1">
    <property type="organism name" value="mouse"/>
</dbReference>
<dbReference type="AGR" id="MGI:104629"/>
<dbReference type="CTD" id="5179"/>
<dbReference type="MGI" id="MGI:104629">
    <property type="gene designation" value="Penk"/>
</dbReference>
<dbReference type="VEuPathDB" id="HostDB:ENSMUSG00000045573"/>
<dbReference type="eggNOG" id="ENOG502QWWK">
    <property type="taxonomic scope" value="Eukaryota"/>
</dbReference>
<dbReference type="GeneTree" id="ENSGT00950000183149"/>
<dbReference type="HOGENOM" id="CLU_070973_0_0_1"/>
<dbReference type="InParanoid" id="P22005"/>
<dbReference type="OMA" id="NPEAGHY"/>
<dbReference type="OrthoDB" id="9928775at2759"/>
<dbReference type="PhylomeDB" id="P22005"/>
<dbReference type="TreeFam" id="TF332620"/>
<dbReference type="Reactome" id="R-MMU-375276">
    <property type="pathway name" value="Peptide ligand-binding receptors"/>
</dbReference>
<dbReference type="Reactome" id="R-MMU-381426">
    <property type="pathway name" value="Regulation of Insulin-like Growth Factor (IGF) transport and uptake by Insulin-like Growth Factor Binding Proteins (IGFBPs)"/>
</dbReference>
<dbReference type="Reactome" id="R-MMU-418594">
    <property type="pathway name" value="G alpha (i) signalling events"/>
</dbReference>
<dbReference type="Reactome" id="R-MMU-8957275">
    <property type="pathway name" value="Post-translational protein phosphorylation"/>
</dbReference>
<dbReference type="BioGRID-ORCS" id="18619">
    <property type="hits" value="3 hits in 76 CRISPR screens"/>
</dbReference>
<dbReference type="ChiTaRS" id="Penk">
    <property type="organism name" value="mouse"/>
</dbReference>
<dbReference type="PRO" id="PR:P22005"/>
<dbReference type="Proteomes" id="UP000000589">
    <property type="component" value="Chromosome 4"/>
</dbReference>
<dbReference type="RNAct" id="P22005">
    <property type="molecule type" value="protein"/>
</dbReference>
<dbReference type="Bgee" id="ENSMUSG00000045573">
    <property type="expression patterns" value="Expressed in caudate-putamen and 257 other cell types or tissues"/>
</dbReference>
<dbReference type="ExpressionAtlas" id="P22005">
    <property type="expression patterns" value="baseline and differential"/>
</dbReference>
<dbReference type="GO" id="GO:0043679">
    <property type="term" value="C:axon terminus"/>
    <property type="evidence" value="ECO:0007669"/>
    <property type="project" value="Ensembl"/>
</dbReference>
<dbReference type="GO" id="GO:0070852">
    <property type="term" value="C:cell body fiber"/>
    <property type="evidence" value="ECO:0007669"/>
    <property type="project" value="Ensembl"/>
</dbReference>
<dbReference type="GO" id="GO:0034466">
    <property type="term" value="C:chromaffin granule lumen"/>
    <property type="evidence" value="ECO:0007669"/>
    <property type="project" value="UniProtKB-SubCell"/>
</dbReference>
<dbReference type="GO" id="GO:0030425">
    <property type="term" value="C:dendrite"/>
    <property type="evidence" value="ECO:0007669"/>
    <property type="project" value="Ensembl"/>
</dbReference>
<dbReference type="GO" id="GO:0005576">
    <property type="term" value="C:extracellular region"/>
    <property type="evidence" value="ECO:0007669"/>
    <property type="project" value="UniProtKB-SubCell"/>
</dbReference>
<dbReference type="GO" id="GO:0099013">
    <property type="term" value="C:neuronal dense core vesicle lumen"/>
    <property type="evidence" value="ECO:0007669"/>
    <property type="project" value="Ensembl"/>
</dbReference>
<dbReference type="GO" id="GO:0043204">
    <property type="term" value="C:perikaryon"/>
    <property type="evidence" value="ECO:0007669"/>
    <property type="project" value="Ensembl"/>
</dbReference>
<dbReference type="GO" id="GO:0032280">
    <property type="term" value="C:symmetric synapse"/>
    <property type="evidence" value="ECO:0007669"/>
    <property type="project" value="Ensembl"/>
</dbReference>
<dbReference type="GO" id="GO:0034592">
    <property type="term" value="C:synaptic vesicle lumen"/>
    <property type="evidence" value="ECO:0007669"/>
    <property type="project" value="Ensembl"/>
</dbReference>
<dbReference type="GO" id="GO:0001515">
    <property type="term" value="F:opioid peptide activity"/>
    <property type="evidence" value="ECO:0007669"/>
    <property type="project" value="UniProtKB-KW"/>
</dbReference>
<dbReference type="GO" id="GO:0048018">
    <property type="term" value="F:receptor ligand activity"/>
    <property type="evidence" value="ECO:0000314"/>
    <property type="project" value="MGI"/>
</dbReference>
<dbReference type="GO" id="GO:0002118">
    <property type="term" value="P:aggressive behavior"/>
    <property type="evidence" value="ECO:0000315"/>
    <property type="project" value="MGI"/>
</dbReference>
<dbReference type="GO" id="GO:0001662">
    <property type="term" value="P:behavioral fear response"/>
    <property type="evidence" value="ECO:0000315"/>
    <property type="project" value="MGI"/>
</dbReference>
<dbReference type="GO" id="GO:0071320">
    <property type="term" value="P:cellular response to cAMP"/>
    <property type="evidence" value="ECO:0007669"/>
    <property type="project" value="Ensembl"/>
</dbReference>
<dbReference type="GO" id="GO:0034599">
    <property type="term" value="P:cellular response to oxidative stress"/>
    <property type="evidence" value="ECO:0007669"/>
    <property type="project" value="Ensembl"/>
</dbReference>
<dbReference type="GO" id="GO:0071560">
    <property type="term" value="P:cellular response to transforming growth factor beta stimulus"/>
    <property type="evidence" value="ECO:0007669"/>
    <property type="project" value="Ensembl"/>
</dbReference>
<dbReference type="GO" id="GO:0098586">
    <property type="term" value="P:cellular response to virus"/>
    <property type="evidence" value="ECO:0007669"/>
    <property type="project" value="Ensembl"/>
</dbReference>
<dbReference type="GO" id="GO:0071305">
    <property type="term" value="P:cellular response to vitamin D"/>
    <property type="evidence" value="ECO:0007669"/>
    <property type="project" value="Ensembl"/>
</dbReference>
<dbReference type="GO" id="GO:0038003">
    <property type="term" value="P:G protein-coupled opioid receptor signaling pathway"/>
    <property type="evidence" value="ECO:0000315"/>
    <property type="project" value="MGI"/>
</dbReference>
<dbReference type="GO" id="GO:0051867">
    <property type="term" value="P:general adaptation syndrome, behavioral process"/>
    <property type="evidence" value="ECO:0007669"/>
    <property type="project" value="Ensembl"/>
</dbReference>
<dbReference type="GO" id="GO:0014009">
    <property type="term" value="P:glial cell proliferation"/>
    <property type="evidence" value="ECO:0007669"/>
    <property type="project" value="Ensembl"/>
</dbReference>
<dbReference type="GO" id="GO:0007626">
    <property type="term" value="P:locomotory behavior"/>
    <property type="evidence" value="ECO:0000315"/>
    <property type="project" value="MGI"/>
</dbReference>
<dbReference type="GO" id="GO:0035641">
    <property type="term" value="P:locomotory exploration behavior"/>
    <property type="evidence" value="ECO:0007669"/>
    <property type="project" value="Ensembl"/>
</dbReference>
<dbReference type="GO" id="GO:0007218">
    <property type="term" value="P:neuropeptide signaling pathway"/>
    <property type="evidence" value="ECO:0007669"/>
    <property type="project" value="UniProtKB-KW"/>
</dbReference>
<dbReference type="GO" id="GO:0001649">
    <property type="term" value="P:osteoblast differentiation"/>
    <property type="evidence" value="ECO:0007669"/>
    <property type="project" value="Ensembl"/>
</dbReference>
<dbReference type="GO" id="GO:2000987">
    <property type="term" value="P:positive regulation of behavioral fear response"/>
    <property type="evidence" value="ECO:0007669"/>
    <property type="project" value="Ensembl"/>
</dbReference>
<dbReference type="GO" id="GO:0009617">
    <property type="term" value="P:response to bacterium"/>
    <property type="evidence" value="ECO:0000270"/>
    <property type="project" value="MGI"/>
</dbReference>
<dbReference type="GO" id="GO:0051592">
    <property type="term" value="P:response to calcium ion"/>
    <property type="evidence" value="ECO:0007669"/>
    <property type="project" value="Ensembl"/>
</dbReference>
<dbReference type="GO" id="GO:0071871">
    <property type="term" value="P:response to epinephrine"/>
    <property type="evidence" value="ECO:0007669"/>
    <property type="project" value="Ensembl"/>
</dbReference>
<dbReference type="GO" id="GO:0032355">
    <property type="term" value="P:response to estradiol"/>
    <property type="evidence" value="ECO:0007669"/>
    <property type="project" value="Ensembl"/>
</dbReference>
<dbReference type="GO" id="GO:0045471">
    <property type="term" value="P:response to ethanol"/>
    <property type="evidence" value="ECO:0007669"/>
    <property type="project" value="Ensembl"/>
</dbReference>
<dbReference type="GO" id="GO:0001666">
    <property type="term" value="P:response to hypoxia"/>
    <property type="evidence" value="ECO:0007669"/>
    <property type="project" value="Ensembl"/>
</dbReference>
<dbReference type="GO" id="GO:0035902">
    <property type="term" value="P:response to immobilization stress"/>
    <property type="evidence" value="ECO:0007669"/>
    <property type="project" value="Ensembl"/>
</dbReference>
<dbReference type="GO" id="GO:0032496">
    <property type="term" value="P:response to lipopolysaccharide"/>
    <property type="evidence" value="ECO:0007669"/>
    <property type="project" value="Ensembl"/>
</dbReference>
<dbReference type="GO" id="GO:0035094">
    <property type="term" value="P:response to nicotine"/>
    <property type="evidence" value="ECO:0007669"/>
    <property type="project" value="Ensembl"/>
</dbReference>
<dbReference type="GO" id="GO:0009636">
    <property type="term" value="P:response to toxic substance"/>
    <property type="evidence" value="ECO:0007669"/>
    <property type="project" value="Ensembl"/>
</dbReference>
<dbReference type="GO" id="GO:0019233">
    <property type="term" value="P:sensory perception of pain"/>
    <property type="evidence" value="ECO:0000315"/>
    <property type="project" value="MGI"/>
</dbReference>
<dbReference type="GO" id="GO:0001964">
    <property type="term" value="P:startle response"/>
    <property type="evidence" value="ECO:0000315"/>
    <property type="project" value="MGI"/>
</dbReference>
<dbReference type="GO" id="GO:0099538">
    <property type="term" value="P:synaptic signaling via neuropeptide"/>
    <property type="evidence" value="ECO:0007669"/>
    <property type="project" value="Ensembl"/>
</dbReference>
<dbReference type="GO" id="GO:0019226">
    <property type="term" value="P:transmission of nerve impulse"/>
    <property type="evidence" value="ECO:0000315"/>
    <property type="project" value="MGI"/>
</dbReference>
<dbReference type="InterPro" id="IPR006024">
    <property type="entry name" value="Opioid_neupept"/>
</dbReference>
<dbReference type="InterPro" id="IPR000703">
    <property type="entry name" value="Proenkphlin_A"/>
</dbReference>
<dbReference type="PANTHER" id="PTHR11438">
    <property type="entry name" value="PROENKEPHALIN"/>
    <property type="match status" value="1"/>
</dbReference>
<dbReference type="PANTHER" id="PTHR11438:SF3">
    <property type="entry name" value="PROENKEPHALIN-A"/>
    <property type="match status" value="1"/>
</dbReference>
<dbReference type="Pfam" id="PF01160">
    <property type="entry name" value="Opiods_neuropep"/>
    <property type="match status" value="1"/>
</dbReference>
<dbReference type="PRINTS" id="PR01028">
    <property type="entry name" value="OPIOIDPRCRSR"/>
</dbReference>
<dbReference type="PRINTS" id="PR01029">
    <property type="entry name" value="PENKAPRCRSR"/>
</dbReference>
<dbReference type="PROSITE" id="PS01252">
    <property type="entry name" value="OPIOIDS_PRECURSOR"/>
    <property type="match status" value="1"/>
</dbReference>
<evidence type="ECO:0000250" key="1">
    <source>
        <dbReference type="UniProtKB" id="P01210"/>
    </source>
</evidence>
<evidence type="ECO:0000250" key="2">
    <source>
        <dbReference type="UniProtKB" id="P01211"/>
    </source>
</evidence>
<evidence type="ECO:0000250" key="3">
    <source>
        <dbReference type="UniProtKB" id="P04094"/>
    </source>
</evidence>
<evidence type="ECO:0000256" key="4">
    <source>
        <dbReference type="SAM" id="MobiDB-lite"/>
    </source>
</evidence>
<evidence type="ECO:0000269" key="5">
    <source>
    </source>
</evidence>
<evidence type="ECO:0000269" key="6">
    <source>
    </source>
</evidence>
<evidence type="ECO:0000269" key="7">
    <source>
    </source>
</evidence>
<evidence type="ECO:0000303" key="8">
    <source>
    </source>
</evidence>
<evidence type="ECO:0000305" key="9"/>
<protein>
    <recommendedName>
        <fullName evidence="9">Proenkephalin-A</fullName>
    </recommendedName>
    <component>
        <recommendedName>
            <fullName>Synenkephalin</fullName>
        </recommendedName>
    </component>
    <component>
        <recommendedName>
            <fullName>Met-enkephalin</fullName>
        </recommendedName>
        <alternativeName>
            <fullName>Opioid growth factor</fullName>
            <shortName>OGF</shortName>
        </alternativeName>
    </component>
    <component>
        <recommendedName>
            <fullName evidence="3">PENK(114-133)</fullName>
        </recommendedName>
    </component>
    <component>
        <recommendedName>
            <fullName evidence="3">PENK(143-184)</fullName>
        </recommendedName>
    </component>
    <component>
        <recommendedName>
            <fullName>Met-enkephalin-Arg-Ser-Leu</fullName>
        </recommendedName>
    </component>
    <component>
        <recommendedName>
            <fullName>Leu-enkephalin</fullName>
        </recommendedName>
    </component>
    <component>
        <recommendedName>
            <fullName evidence="3">PENK(238-259)</fullName>
        </recommendedName>
    </component>
    <component>
        <recommendedName>
            <fullName evidence="8">Met-enkephalin-Arg-Phe</fullName>
        </recommendedName>
    </component>
</protein>
<name>PENK_MOUSE</name>
<comment type="function">
    <molecule>Met-enkephalin</molecule>
    <text evidence="1">Neuropeptide that competes with and mimic the effects of opiate drugs. They play a role in a number of physiologic functions, including pain perception and responses to stress.</text>
</comment>
<comment type="function">
    <molecule>Leu-enkephalin</molecule>
    <text evidence="1">Neuropeptide that competes with and mimic the effects of opiate drugs. They play a role in a number of physiologic functions, including pain perception and responses to stress.</text>
</comment>
<comment type="function">
    <molecule>Met-enkephalin-Arg-Phe</molecule>
    <text evidence="6 7">Met-enkephalin-Arg-Phe neuropeptide acts as a strong ligand of Mu-type opioid receptor OPRM1 (PubMed:35201898, PubMed:6933569). Met-enkephalin-Arg-Phe-binding to OPRM1 in the nucleus accumbens of the brain increases activation of OPRM1, leading to long-term synaptic depression of glutamate release (PubMed:35201898).</text>
</comment>
<comment type="function">
    <molecule>PENK(114-133)</molecule>
    <text evidence="3">Increases glutamate release in the striatum and decreases GABA concentration in the striatum.</text>
</comment>
<comment type="function">
    <molecule>PENK(238-259)</molecule>
    <text evidence="3">Increases glutamate release in the striatum.</text>
</comment>
<comment type="subcellular location">
    <subcellularLocation>
        <location evidence="2">Cytoplasmic vesicle</location>
        <location evidence="2">Secretory vesicle</location>
        <location evidence="2">Chromaffin granule lumen</location>
    </subcellularLocation>
    <subcellularLocation>
        <location evidence="2">Secreted</location>
    </subcellularLocation>
</comment>
<comment type="tissue specificity">
    <text evidence="5">Spermatogenic and somatic cells.</text>
</comment>
<comment type="developmental stage">
    <text evidence="5">Highest expression in late pachytene spermatocytes and postmeiotic round spermatids.</text>
</comment>
<comment type="PTM">
    <text evidence="2">Proenkephalin-A is cleaved by CTSL to generate Met-enkephalin.</text>
</comment>
<comment type="PTM">
    <molecule>Met-enkephalin</molecule>
    <text evidence="1">Processed and degraded by ACE.</text>
</comment>
<comment type="PTM">
    <molecule>Leu-enkephalin</molecule>
    <text evidence="1">Processed and degraded by ACE.</text>
</comment>
<comment type="PTM">
    <molecule>Met-enkephalin-Arg-Ser-Leu</molecule>
    <text evidence="1">Probably cleaved by ACE.</text>
</comment>
<comment type="PTM">
    <molecule>Met-enkephalin-Arg-Phe</molecule>
    <text evidence="6">Processed by ACE to generate Met-enkephalin in the nucleus accumbens of the brain.</text>
</comment>
<comment type="PTM">
    <text evidence="1">The N-terminal domain contains 6 conserved cysteines thought to be involved in disulfide bonding and/or processing.</text>
</comment>
<comment type="similarity">
    <text evidence="9">Belongs to the opioid neuropeptide precursor family.</text>
</comment>
<sequence>MARFLRLCTWLLALGSCLLATVQAECSQDCAKCSYRLVRPGDINFLACTLECEGQLPSFKIWETCKDLLQVSRPEFPWDNIDMYKDSSKQDESHLLAKKYGGFMKRYGGFMKKMDELYPMEPEEEANGGEILAKRYGGFMKKDADEGDTLANSSDLLKELLGTGDNRAKDSHQQESTNNDEDMSKRYGGFMRSLKRSPQLEDEAKELQKRYGGFMRRVGRPEWWMDYQKRYGGFLKRFAESLPSDEEGENYSKEVPEIEKRYGGFMRF</sequence>
<gene>
    <name type="primary">Penk</name>
    <name type="synonym">Penk1</name>
</gene>
<reference key="1">
    <citation type="journal article" date="1990" name="Mol. Cell. Biol.">
        <title>Transcription of the rat and mouse proenkephalin genes is initiated at distinct sites in spermatogenic and somatic cells.</title>
        <authorList>
            <person name="Kilpatrick D.L."/>
            <person name="Zinn S.A."/>
            <person name="Fitzgerald M."/>
            <person name="Higuchi H."/>
            <person name="Sabol S.L."/>
            <person name="Meyerhardt J."/>
        </authorList>
    </citation>
    <scope>NUCLEOTIDE SEQUENCE [MRNA]</scope>
    <scope>TISSUE SPECIFICITY</scope>
    <scope>DEVELOPMENTAL STAGE</scope>
    <source>
        <tissue>Testis</tissue>
    </source>
</reference>
<reference key="2">
    <citation type="journal article" date="2005" name="Science">
        <title>The transcriptional landscape of the mammalian genome.</title>
        <authorList>
            <person name="Carninci P."/>
            <person name="Kasukawa T."/>
            <person name="Katayama S."/>
            <person name="Gough J."/>
            <person name="Frith M.C."/>
            <person name="Maeda N."/>
            <person name="Oyama R."/>
            <person name="Ravasi T."/>
            <person name="Lenhard B."/>
            <person name="Wells C."/>
            <person name="Kodzius R."/>
            <person name="Shimokawa K."/>
            <person name="Bajic V.B."/>
            <person name="Brenner S.E."/>
            <person name="Batalov S."/>
            <person name="Forrest A.R."/>
            <person name="Zavolan M."/>
            <person name="Davis M.J."/>
            <person name="Wilming L.G."/>
            <person name="Aidinis V."/>
            <person name="Allen J.E."/>
            <person name="Ambesi-Impiombato A."/>
            <person name="Apweiler R."/>
            <person name="Aturaliya R.N."/>
            <person name="Bailey T.L."/>
            <person name="Bansal M."/>
            <person name="Baxter L."/>
            <person name="Beisel K.W."/>
            <person name="Bersano T."/>
            <person name="Bono H."/>
            <person name="Chalk A.M."/>
            <person name="Chiu K.P."/>
            <person name="Choudhary V."/>
            <person name="Christoffels A."/>
            <person name="Clutterbuck D.R."/>
            <person name="Crowe M.L."/>
            <person name="Dalla E."/>
            <person name="Dalrymple B.P."/>
            <person name="de Bono B."/>
            <person name="Della Gatta G."/>
            <person name="di Bernardo D."/>
            <person name="Down T."/>
            <person name="Engstrom P."/>
            <person name="Fagiolini M."/>
            <person name="Faulkner G."/>
            <person name="Fletcher C.F."/>
            <person name="Fukushima T."/>
            <person name="Furuno M."/>
            <person name="Futaki S."/>
            <person name="Gariboldi M."/>
            <person name="Georgii-Hemming P."/>
            <person name="Gingeras T.R."/>
            <person name="Gojobori T."/>
            <person name="Green R.E."/>
            <person name="Gustincich S."/>
            <person name="Harbers M."/>
            <person name="Hayashi Y."/>
            <person name="Hensch T.K."/>
            <person name="Hirokawa N."/>
            <person name="Hill D."/>
            <person name="Huminiecki L."/>
            <person name="Iacono M."/>
            <person name="Ikeo K."/>
            <person name="Iwama A."/>
            <person name="Ishikawa T."/>
            <person name="Jakt M."/>
            <person name="Kanapin A."/>
            <person name="Katoh M."/>
            <person name="Kawasawa Y."/>
            <person name="Kelso J."/>
            <person name="Kitamura H."/>
            <person name="Kitano H."/>
            <person name="Kollias G."/>
            <person name="Krishnan S.P."/>
            <person name="Kruger A."/>
            <person name="Kummerfeld S.K."/>
            <person name="Kurochkin I.V."/>
            <person name="Lareau L.F."/>
            <person name="Lazarevic D."/>
            <person name="Lipovich L."/>
            <person name="Liu J."/>
            <person name="Liuni S."/>
            <person name="McWilliam S."/>
            <person name="Madan Babu M."/>
            <person name="Madera M."/>
            <person name="Marchionni L."/>
            <person name="Matsuda H."/>
            <person name="Matsuzawa S."/>
            <person name="Miki H."/>
            <person name="Mignone F."/>
            <person name="Miyake S."/>
            <person name="Morris K."/>
            <person name="Mottagui-Tabar S."/>
            <person name="Mulder N."/>
            <person name="Nakano N."/>
            <person name="Nakauchi H."/>
            <person name="Ng P."/>
            <person name="Nilsson R."/>
            <person name="Nishiguchi S."/>
            <person name="Nishikawa S."/>
            <person name="Nori F."/>
            <person name="Ohara O."/>
            <person name="Okazaki Y."/>
            <person name="Orlando V."/>
            <person name="Pang K.C."/>
            <person name="Pavan W.J."/>
            <person name="Pavesi G."/>
            <person name="Pesole G."/>
            <person name="Petrovsky N."/>
            <person name="Piazza S."/>
            <person name="Reed J."/>
            <person name="Reid J.F."/>
            <person name="Ring B.Z."/>
            <person name="Ringwald M."/>
            <person name="Rost B."/>
            <person name="Ruan Y."/>
            <person name="Salzberg S.L."/>
            <person name="Sandelin A."/>
            <person name="Schneider C."/>
            <person name="Schoenbach C."/>
            <person name="Sekiguchi K."/>
            <person name="Semple C.A."/>
            <person name="Seno S."/>
            <person name="Sessa L."/>
            <person name="Sheng Y."/>
            <person name="Shibata Y."/>
            <person name="Shimada H."/>
            <person name="Shimada K."/>
            <person name="Silva D."/>
            <person name="Sinclair B."/>
            <person name="Sperling S."/>
            <person name="Stupka E."/>
            <person name="Sugiura K."/>
            <person name="Sultana R."/>
            <person name="Takenaka Y."/>
            <person name="Taki K."/>
            <person name="Tammoja K."/>
            <person name="Tan S.L."/>
            <person name="Tang S."/>
            <person name="Taylor M.S."/>
            <person name="Tegner J."/>
            <person name="Teichmann S.A."/>
            <person name="Ueda H.R."/>
            <person name="van Nimwegen E."/>
            <person name="Verardo R."/>
            <person name="Wei C.L."/>
            <person name="Yagi K."/>
            <person name="Yamanishi H."/>
            <person name="Zabarovsky E."/>
            <person name="Zhu S."/>
            <person name="Zimmer A."/>
            <person name="Hide W."/>
            <person name="Bult C."/>
            <person name="Grimmond S.M."/>
            <person name="Teasdale R.D."/>
            <person name="Liu E.T."/>
            <person name="Brusic V."/>
            <person name="Quackenbush J."/>
            <person name="Wahlestedt C."/>
            <person name="Mattick J.S."/>
            <person name="Hume D.A."/>
            <person name="Kai C."/>
            <person name="Sasaki D."/>
            <person name="Tomaru Y."/>
            <person name="Fukuda S."/>
            <person name="Kanamori-Katayama M."/>
            <person name="Suzuki M."/>
            <person name="Aoki J."/>
            <person name="Arakawa T."/>
            <person name="Iida J."/>
            <person name="Imamura K."/>
            <person name="Itoh M."/>
            <person name="Kato T."/>
            <person name="Kawaji H."/>
            <person name="Kawagashira N."/>
            <person name="Kawashima T."/>
            <person name="Kojima M."/>
            <person name="Kondo S."/>
            <person name="Konno H."/>
            <person name="Nakano K."/>
            <person name="Ninomiya N."/>
            <person name="Nishio T."/>
            <person name="Okada M."/>
            <person name="Plessy C."/>
            <person name="Shibata K."/>
            <person name="Shiraki T."/>
            <person name="Suzuki S."/>
            <person name="Tagami M."/>
            <person name="Waki K."/>
            <person name="Watahiki A."/>
            <person name="Okamura-Oho Y."/>
            <person name="Suzuki H."/>
            <person name="Kawai J."/>
            <person name="Hayashizaki Y."/>
        </authorList>
    </citation>
    <scope>NUCLEOTIDE SEQUENCE [LARGE SCALE MRNA]</scope>
    <source>
        <strain>C57BL/6J</strain>
        <tissue>Testis</tissue>
    </source>
</reference>
<reference key="3">
    <citation type="journal article" date="2009" name="PLoS Biol.">
        <title>Lineage-specific biology revealed by a finished genome assembly of the mouse.</title>
        <authorList>
            <person name="Church D.M."/>
            <person name="Goodstadt L."/>
            <person name="Hillier L.W."/>
            <person name="Zody M.C."/>
            <person name="Goldstein S."/>
            <person name="She X."/>
            <person name="Bult C.J."/>
            <person name="Agarwala R."/>
            <person name="Cherry J.L."/>
            <person name="DiCuccio M."/>
            <person name="Hlavina W."/>
            <person name="Kapustin Y."/>
            <person name="Meric P."/>
            <person name="Maglott D."/>
            <person name="Birtle Z."/>
            <person name="Marques A.C."/>
            <person name="Graves T."/>
            <person name="Zhou S."/>
            <person name="Teague B."/>
            <person name="Potamousis K."/>
            <person name="Churas C."/>
            <person name="Place M."/>
            <person name="Herschleb J."/>
            <person name="Runnheim R."/>
            <person name="Forrest D."/>
            <person name="Amos-Landgraf J."/>
            <person name="Schwartz D.C."/>
            <person name="Cheng Z."/>
            <person name="Lindblad-Toh K."/>
            <person name="Eichler E.E."/>
            <person name="Ponting C.P."/>
        </authorList>
    </citation>
    <scope>NUCLEOTIDE SEQUENCE [LARGE SCALE GENOMIC DNA]</scope>
    <source>
        <strain>C57BL/6J</strain>
    </source>
</reference>
<reference key="4">
    <citation type="submission" date="2005-09" db="EMBL/GenBank/DDBJ databases">
        <authorList>
            <person name="Mural R.J."/>
            <person name="Adams M.D."/>
            <person name="Myers E.W."/>
            <person name="Smith H.O."/>
            <person name="Venter J.C."/>
        </authorList>
    </citation>
    <scope>NUCLEOTIDE SEQUENCE [LARGE SCALE GENOMIC DNA]</scope>
</reference>
<reference key="5">
    <citation type="journal article" date="2004" name="Genome Res.">
        <title>The status, quality, and expansion of the NIH full-length cDNA project: the Mammalian Gene Collection (MGC).</title>
        <authorList>
            <consortium name="The MGC Project Team"/>
        </authorList>
    </citation>
    <scope>NUCLEOTIDE SEQUENCE [LARGE SCALE MRNA]</scope>
    <source>
        <tissue>Testis</tissue>
    </source>
</reference>
<reference key="6">
    <citation type="journal article" date="1986" name="Science">
        <title>Activation of mouse T-helper cells induces abundant preproenkephalin mRNA synthesis.</title>
        <authorList>
            <person name="Zurawski G."/>
            <person name="Benedik M."/>
            <person name="Kamb B.J."/>
            <person name="Abrams J.S."/>
            <person name="Zurawski S.M."/>
            <person name="Lee F.D."/>
        </authorList>
    </citation>
    <scope>NUCLEOTIDE SEQUENCE [MRNA] OF 29-268</scope>
    <source>
        <tissue>T-cell</tissue>
    </source>
</reference>
<reference key="7">
    <citation type="journal article" date="1980" name="Proc. Natl. Acad. Sci. U.S.A.">
        <title>Analgesic activity of the naturally occurring heptapeptide [Met]enkephalin-Arg6-Phe7.</title>
        <authorList>
            <person name="Inturrisi C.E."/>
            <person name="Umans J.G."/>
            <person name="Wolff D."/>
            <person name="Stern A.S."/>
            <person name="Lewis R.V."/>
            <person name="Stein S."/>
            <person name="Udenfriend S."/>
        </authorList>
    </citation>
    <scope>FUNCTION (MET-ENKEPHALIN-ARG-PHE)</scope>
</reference>
<reference key="8">
    <citation type="journal article" date="2010" name="Cell">
        <title>A tissue-specific atlas of mouse protein phosphorylation and expression.</title>
        <authorList>
            <person name="Huttlin E.L."/>
            <person name="Jedrychowski M.P."/>
            <person name="Elias J.E."/>
            <person name="Goswami T."/>
            <person name="Rad R."/>
            <person name="Beausoleil S.A."/>
            <person name="Villen J."/>
            <person name="Haas W."/>
            <person name="Sowa M.E."/>
            <person name="Gygi S.P."/>
        </authorList>
    </citation>
    <scope>IDENTIFICATION BY MASS SPECTROMETRY [LARGE SCALE ANALYSIS]</scope>
    <source>
        <tissue>Brain</tissue>
    </source>
</reference>
<reference key="9">
    <citation type="journal article" date="2022" name="Science">
        <title>Angiotensin-converting enzyme gates brain circuit-specific plasticity via an endogenous opioid.</title>
        <authorList>
            <person name="Trieu B.H."/>
            <person name="Remmers B.C."/>
            <person name="Toddes C."/>
            <person name="Brandner D.D."/>
            <person name="Lefevre E.M."/>
            <person name="Kocharian A."/>
            <person name="Retzlaff C.L."/>
            <person name="Dick R.M."/>
            <person name="Mashal M.A."/>
            <person name="Gauthier E.A."/>
            <person name="Xie W."/>
            <person name="Zhang Y."/>
            <person name="More S.S."/>
            <person name="Rothwell P.E."/>
        </authorList>
    </citation>
    <scope>FUNCTION (MET-ENKEPHALIN-ARG-PHE)</scope>
    <scope>PROTEOLYTIC CLEAVAGE (MET-ENKEPHALIN-ARG-PHE)</scope>
</reference>
<proteinExistence type="evidence at protein level"/>
<organism>
    <name type="scientific">Mus musculus</name>
    <name type="common">Mouse</name>
    <dbReference type="NCBI Taxonomy" id="10090"/>
    <lineage>
        <taxon>Eukaryota</taxon>
        <taxon>Metazoa</taxon>
        <taxon>Chordata</taxon>
        <taxon>Craniata</taxon>
        <taxon>Vertebrata</taxon>
        <taxon>Euteleostomi</taxon>
        <taxon>Mammalia</taxon>
        <taxon>Eutheria</taxon>
        <taxon>Euarchontoglires</taxon>
        <taxon>Glires</taxon>
        <taxon>Rodentia</taxon>
        <taxon>Myomorpha</taxon>
        <taxon>Muroidea</taxon>
        <taxon>Muridae</taxon>
        <taxon>Murinae</taxon>
        <taxon>Mus</taxon>
        <taxon>Mus</taxon>
    </lineage>
</organism>
<accession>P22005</accession>
<accession>Q68G73</accession>
<keyword id="KW-0165">Cleavage on pair of basic residues</keyword>
<keyword id="KW-0968">Cytoplasmic vesicle</keyword>
<keyword id="KW-1015">Disulfide bond</keyword>
<keyword id="KW-0257">Endorphin</keyword>
<keyword id="KW-0527">Neuropeptide</keyword>
<keyword id="KW-0555">Opioid peptide</keyword>
<keyword id="KW-0597">Phosphoprotein</keyword>
<keyword id="KW-1185">Reference proteome</keyword>
<keyword id="KW-0964">Secreted</keyword>
<keyword id="KW-0732">Signal</keyword>
<feature type="signal peptide">
    <location>
        <begin position="1"/>
        <end position="24"/>
    </location>
</feature>
<feature type="peptide" id="PRO_0000008268" description="Synenkephalin">
    <location>
        <begin position="25"/>
        <end position="97"/>
    </location>
</feature>
<feature type="peptide" id="PRO_0000008269" description="Met-enkephalin">
    <location>
        <begin position="100"/>
        <end position="104"/>
    </location>
</feature>
<feature type="peptide" id="PRO_0000008270" description="Met-enkephalin">
    <location>
        <begin position="107"/>
        <end position="111"/>
    </location>
</feature>
<feature type="peptide" id="PRO_0000377694" description="PENK(114-133)" evidence="3">
    <location>
        <begin position="114"/>
        <end position="133"/>
    </location>
</feature>
<feature type="peptide" id="PRO_0000008272" description="Met-enkephalin">
    <location>
        <begin position="136"/>
        <end position="140"/>
    </location>
</feature>
<feature type="peptide" id="PRO_0000377695" description="PENK(143-184)" evidence="3">
    <location>
        <begin position="143"/>
        <end position="184"/>
    </location>
</feature>
<feature type="peptide" id="PRO_0000008274" description="Met-enkephalin-Arg-Ser-Leu">
    <location>
        <begin position="187"/>
        <end position="194"/>
    </location>
</feature>
<feature type="propeptide" id="PRO_0000008275">
    <location>
        <begin position="197"/>
        <end position="208"/>
    </location>
</feature>
<feature type="peptide" id="PRO_0000008276" description="Met-enkephalin">
    <location>
        <begin position="211"/>
        <end position="215"/>
    </location>
</feature>
<feature type="propeptide" id="PRO_0000008277">
    <location>
        <begin position="218"/>
        <end position="228"/>
    </location>
</feature>
<feature type="peptide" id="PRO_0000008278" description="Leu-enkephalin">
    <location>
        <begin position="231"/>
        <end position="235"/>
    </location>
</feature>
<feature type="peptide" id="PRO_0000377696" description="PENK(238-259)" evidence="3">
    <location>
        <begin position="238"/>
        <end position="259"/>
    </location>
</feature>
<feature type="peptide" id="PRO_0000008280" description="Met-enkephalin-Arg-Phe" evidence="6">
    <location>
        <begin position="262"/>
        <end position="268"/>
    </location>
</feature>
<feature type="region of interest" description="Disordered" evidence="4">
    <location>
        <begin position="163"/>
        <end position="184"/>
    </location>
</feature>
<feature type="site" description="Cleavage; by CTSL" evidence="2">
    <location>
        <begin position="111"/>
        <end position="112"/>
    </location>
</feature>
<feature type="site" description="Cleavage; by CTSL" evidence="2">
    <location>
        <begin position="112"/>
        <end position="113"/>
    </location>
</feature>
<feature type="site" description="Cleavage; by CTSL" evidence="2">
    <location>
        <begin position="133"/>
        <end position="134"/>
    </location>
</feature>
<feature type="site" description="Cleavage; by CTSL" evidence="2">
    <location>
        <begin position="215"/>
        <end position="216"/>
    </location>
</feature>
<feature type="site" description="Cleavage; by CTSL" evidence="2">
    <location>
        <begin position="216"/>
        <end position="217"/>
    </location>
</feature>
<feature type="site" description="Cleavage; by CTSL" evidence="2">
    <location>
        <begin position="219"/>
        <end position="220"/>
    </location>
</feature>
<feature type="modified residue" description="Phosphoserine" evidence="3">
    <location>
        <position position="252"/>
    </location>
</feature>
<feature type="disulfide bond" evidence="1">
    <location>
        <begin position="26"/>
        <end position="48"/>
    </location>
</feature>
<feature type="disulfide bond" evidence="1">
    <location>
        <begin position="30"/>
        <end position="52"/>
    </location>
</feature>
<feature type="disulfide bond" evidence="1">
    <location>
        <begin position="33"/>
        <end position="65"/>
    </location>
</feature>
<feature type="sequence conflict" description="In Ref. 1; AAA40128." evidence="9" ref="1">
    <original>S</original>
    <variation>T</variation>
    <location>
        <position position="34"/>
    </location>
</feature>
<feature type="sequence conflict" description="In Ref. 1; AAA40128." evidence="9" ref="1">
    <original>S</original>
    <variation>SS</variation>
    <location>
        <position position="184"/>
    </location>
</feature>